<feature type="chain" id="PRO_1000016831" description="Queuine tRNA-ribosyltransferase">
    <location>
        <begin position="1"/>
        <end position="376"/>
    </location>
</feature>
<feature type="region of interest" description="RNA binding" evidence="1">
    <location>
        <begin position="251"/>
        <end position="257"/>
    </location>
</feature>
<feature type="region of interest" description="RNA binding; important for wobble base 34 recognition" evidence="1">
    <location>
        <begin position="275"/>
        <end position="279"/>
    </location>
</feature>
<feature type="active site" description="Proton acceptor" evidence="1">
    <location>
        <position position="90"/>
    </location>
</feature>
<feature type="active site" description="Nucleophile" evidence="1">
    <location>
        <position position="270"/>
    </location>
</feature>
<feature type="binding site" evidence="1">
    <location>
        <begin position="90"/>
        <end position="94"/>
    </location>
    <ligand>
        <name>substrate</name>
    </ligand>
</feature>
<feature type="binding site" evidence="1">
    <location>
        <position position="144"/>
    </location>
    <ligand>
        <name>substrate</name>
    </ligand>
</feature>
<feature type="binding site" evidence="1">
    <location>
        <position position="193"/>
    </location>
    <ligand>
        <name>substrate</name>
    </ligand>
</feature>
<feature type="binding site" evidence="1">
    <location>
        <position position="220"/>
    </location>
    <ligand>
        <name>substrate</name>
    </ligand>
</feature>
<feature type="binding site" evidence="1">
    <location>
        <position position="308"/>
    </location>
    <ligand>
        <name>Zn(2+)</name>
        <dbReference type="ChEBI" id="CHEBI:29105"/>
    </ligand>
</feature>
<feature type="binding site" evidence="1">
    <location>
        <position position="310"/>
    </location>
    <ligand>
        <name>Zn(2+)</name>
        <dbReference type="ChEBI" id="CHEBI:29105"/>
    </ligand>
</feature>
<feature type="binding site" evidence="1">
    <location>
        <position position="313"/>
    </location>
    <ligand>
        <name>Zn(2+)</name>
        <dbReference type="ChEBI" id="CHEBI:29105"/>
    </ligand>
</feature>
<feature type="binding site" evidence="1">
    <location>
        <position position="339"/>
    </location>
    <ligand>
        <name>Zn(2+)</name>
        <dbReference type="ChEBI" id="CHEBI:29105"/>
    </ligand>
</feature>
<comment type="function">
    <text evidence="1">Catalyzes the base-exchange of a guanine (G) residue with the queuine precursor 7-aminomethyl-7-deazaguanine (PreQ1) at position 34 (anticodon wobble position) in tRNAs with GU(N) anticodons (tRNA-Asp, -Asn, -His and -Tyr). Catalysis occurs through a double-displacement mechanism. The nucleophile active site attacks the C1' of nucleotide 34 to detach the guanine base from the RNA, forming a covalent enzyme-RNA intermediate. The proton acceptor active site deprotonates the incoming PreQ1, allowing a nucleophilic attack on the C1' of the ribose to form the product. After dissociation, two additional enzymatic reactions on the tRNA convert PreQ1 to queuine (Q), resulting in the hypermodified nucleoside queuosine (7-(((4,5-cis-dihydroxy-2-cyclopenten-1-yl)amino)methyl)-7-deazaguanosine).</text>
</comment>
<comment type="catalytic activity">
    <reaction evidence="1">
        <text>7-aminomethyl-7-carbaguanine + guanosine(34) in tRNA = 7-aminomethyl-7-carbaguanosine(34) in tRNA + guanine</text>
        <dbReference type="Rhea" id="RHEA:24104"/>
        <dbReference type="Rhea" id="RHEA-COMP:10341"/>
        <dbReference type="Rhea" id="RHEA-COMP:10342"/>
        <dbReference type="ChEBI" id="CHEBI:16235"/>
        <dbReference type="ChEBI" id="CHEBI:58703"/>
        <dbReference type="ChEBI" id="CHEBI:74269"/>
        <dbReference type="ChEBI" id="CHEBI:82833"/>
        <dbReference type="EC" id="2.4.2.29"/>
    </reaction>
</comment>
<comment type="cofactor">
    <cofactor evidence="1">
        <name>Zn(2+)</name>
        <dbReference type="ChEBI" id="CHEBI:29105"/>
    </cofactor>
    <text evidence="1">Binds 1 zinc ion per subunit.</text>
</comment>
<comment type="pathway">
    <text evidence="1">tRNA modification; tRNA-queuosine biosynthesis.</text>
</comment>
<comment type="subunit">
    <text evidence="1">Homodimer. Within each dimer, one monomer is responsible for RNA recognition and catalysis, while the other monomer binds to the replacement base PreQ1.</text>
</comment>
<comment type="similarity">
    <text evidence="1">Belongs to the queuine tRNA-ribosyltransferase family.</text>
</comment>
<organism>
    <name type="scientific">Cupriavidus necator (strain ATCC 17699 / DSM 428 / KCTC 22496 / NCIMB 10442 / H16 / Stanier 337)</name>
    <name type="common">Ralstonia eutropha</name>
    <dbReference type="NCBI Taxonomy" id="381666"/>
    <lineage>
        <taxon>Bacteria</taxon>
        <taxon>Pseudomonadati</taxon>
        <taxon>Pseudomonadota</taxon>
        <taxon>Betaproteobacteria</taxon>
        <taxon>Burkholderiales</taxon>
        <taxon>Burkholderiaceae</taxon>
        <taxon>Cupriavidus</taxon>
    </lineage>
</organism>
<keyword id="KW-0328">Glycosyltransferase</keyword>
<keyword id="KW-0479">Metal-binding</keyword>
<keyword id="KW-0671">Queuosine biosynthesis</keyword>
<keyword id="KW-1185">Reference proteome</keyword>
<keyword id="KW-0808">Transferase</keyword>
<keyword id="KW-0819">tRNA processing</keyword>
<keyword id="KW-0862">Zinc</keyword>
<accession>Q0K733</accession>
<dbReference type="EC" id="2.4.2.29" evidence="1"/>
<dbReference type="EMBL" id="AM260479">
    <property type="protein sequence ID" value="CAJ94188.1"/>
    <property type="molecule type" value="Genomic_DNA"/>
</dbReference>
<dbReference type="RefSeq" id="WP_010815060.1">
    <property type="nucleotide sequence ID" value="NZ_CP039287.1"/>
</dbReference>
<dbReference type="SMR" id="Q0K733"/>
<dbReference type="STRING" id="381666.H16_A3113"/>
<dbReference type="KEGG" id="reh:H16_A3113"/>
<dbReference type="eggNOG" id="COG0343">
    <property type="taxonomic scope" value="Bacteria"/>
</dbReference>
<dbReference type="HOGENOM" id="CLU_022060_0_1_4"/>
<dbReference type="OrthoDB" id="9805417at2"/>
<dbReference type="UniPathway" id="UPA00392"/>
<dbReference type="Proteomes" id="UP000008210">
    <property type="component" value="Chromosome 1"/>
</dbReference>
<dbReference type="GO" id="GO:0005829">
    <property type="term" value="C:cytosol"/>
    <property type="evidence" value="ECO:0007669"/>
    <property type="project" value="TreeGrafter"/>
</dbReference>
<dbReference type="GO" id="GO:0046872">
    <property type="term" value="F:metal ion binding"/>
    <property type="evidence" value="ECO:0007669"/>
    <property type="project" value="UniProtKB-KW"/>
</dbReference>
<dbReference type="GO" id="GO:0008479">
    <property type="term" value="F:tRNA-guanosine(34) queuine transglycosylase activity"/>
    <property type="evidence" value="ECO:0007669"/>
    <property type="project" value="UniProtKB-UniRule"/>
</dbReference>
<dbReference type="GO" id="GO:0008616">
    <property type="term" value="P:queuosine biosynthetic process"/>
    <property type="evidence" value="ECO:0007669"/>
    <property type="project" value="UniProtKB-UniRule"/>
</dbReference>
<dbReference type="GO" id="GO:0002099">
    <property type="term" value="P:tRNA wobble guanine modification"/>
    <property type="evidence" value="ECO:0007669"/>
    <property type="project" value="TreeGrafter"/>
</dbReference>
<dbReference type="GO" id="GO:0101030">
    <property type="term" value="P:tRNA-guanine transglycosylation"/>
    <property type="evidence" value="ECO:0007669"/>
    <property type="project" value="InterPro"/>
</dbReference>
<dbReference type="FunFam" id="3.20.20.105:FF:000001">
    <property type="entry name" value="Queuine tRNA-ribosyltransferase"/>
    <property type="match status" value="1"/>
</dbReference>
<dbReference type="Gene3D" id="3.20.20.105">
    <property type="entry name" value="Queuine tRNA-ribosyltransferase-like"/>
    <property type="match status" value="1"/>
</dbReference>
<dbReference type="HAMAP" id="MF_00168">
    <property type="entry name" value="Q_tRNA_Tgt"/>
    <property type="match status" value="1"/>
</dbReference>
<dbReference type="InterPro" id="IPR050076">
    <property type="entry name" value="ArchSynthase1/Queuine_TRR"/>
</dbReference>
<dbReference type="InterPro" id="IPR004803">
    <property type="entry name" value="TGT"/>
</dbReference>
<dbReference type="InterPro" id="IPR036511">
    <property type="entry name" value="TGT-like_sf"/>
</dbReference>
<dbReference type="InterPro" id="IPR002616">
    <property type="entry name" value="tRNA_ribo_trans-like"/>
</dbReference>
<dbReference type="NCBIfam" id="TIGR00430">
    <property type="entry name" value="Q_tRNA_tgt"/>
    <property type="match status" value="1"/>
</dbReference>
<dbReference type="NCBIfam" id="TIGR00449">
    <property type="entry name" value="tgt_general"/>
    <property type="match status" value="1"/>
</dbReference>
<dbReference type="PANTHER" id="PTHR46499">
    <property type="entry name" value="QUEUINE TRNA-RIBOSYLTRANSFERASE"/>
    <property type="match status" value="1"/>
</dbReference>
<dbReference type="PANTHER" id="PTHR46499:SF1">
    <property type="entry name" value="QUEUINE TRNA-RIBOSYLTRANSFERASE"/>
    <property type="match status" value="1"/>
</dbReference>
<dbReference type="Pfam" id="PF01702">
    <property type="entry name" value="TGT"/>
    <property type="match status" value="1"/>
</dbReference>
<dbReference type="SUPFAM" id="SSF51713">
    <property type="entry name" value="tRNA-guanine transglycosylase"/>
    <property type="match status" value="1"/>
</dbReference>
<name>TGT_CUPNH</name>
<gene>
    <name evidence="1" type="primary">tgt</name>
    <name type="ordered locus">H16_A3113</name>
</gene>
<sequence>MLNFELITTDGNARRGRVTLNHGVVETPIFMPVGTYGSVKAMSPLELNEIGAHIILGNTFHLWLRPGLDVVNAHEGLHKFIGWDKPILTDSGGFQVFSLGDLRKITEDGVTFASPVNGDKLFLSPEISMQIQRTLNSDIVMQFDECTPYEIDGRAATHEEAAKSMRMSLRWAKRSRDEFERLANPNALFGIVQGGMYEDLRDESLAGLSELDFHGFAIGGLSVGEPKEDMMRVLEHVAPRLPAHKPHYLMGVGTPEDLVAGVAAGVDMFDCVMPTRNARNGWLFTRFGDVKIKNAAHRNDPRPLDESCACYTCRNFSRAYLHHLHRVGEILGARLNTIHNLHYYLQLMREMREAIEHHRFADFRRQFAADRARGTQ</sequence>
<reference key="1">
    <citation type="journal article" date="2006" name="Nat. Biotechnol.">
        <title>Genome sequence of the bioplastic-producing 'Knallgas' bacterium Ralstonia eutropha H16.</title>
        <authorList>
            <person name="Pohlmann A."/>
            <person name="Fricke W.F."/>
            <person name="Reinecke F."/>
            <person name="Kusian B."/>
            <person name="Liesegang H."/>
            <person name="Cramm R."/>
            <person name="Eitinger T."/>
            <person name="Ewering C."/>
            <person name="Poetter M."/>
            <person name="Schwartz E."/>
            <person name="Strittmatter A."/>
            <person name="Voss I."/>
            <person name="Gottschalk G."/>
            <person name="Steinbuechel A."/>
            <person name="Friedrich B."/>
            <person name="Bowien B."/>
        </authorList>
    </citation>
    <scope>NUCLEOTIDE SEQUENCE [LARGE SCALE GENOMIC DNA]</scope>
    <source>
        <strain>ATCC 17699 / DSM 428 / KCTC 22496 / NCIMB 10442 / H16 / Stanier 337</strain>
    </source>
</reference>
<evidence type="ECO:0000255" key="1">
    <source>
        <dbReference type="HAMAP-Rule" id="MF_00168"/>
    </source>
</evidence>
<protein>
    <recommendedName>
        <fullName evidence="1">Queuine tRNA-ribosyltransferase</fullName>
        <ecNumber evidence="1">2.4.2.29</ecNumber>
    </recommendedName>
    <alternativeName>
        <fullName evidence="1">Guanine insertion enzyme</fullName>
    </alternativeName>
    <alternativeName>
        <fullName evidence="1">tRNA-guanine transglycosylase</fullName>
    </alternativeName>
</protein>
<proteinExistence type="inferred from homology"/>